<dbReference type="EC" id="2.7.7.56" evidence="1"/>
<dbReference type="EMBL" id="CP001052">
    <property type="protein sequence ID" value="ACD17479.1"/>
    <property type="molecule type" value="Genomic_DNA"/>
</dbReference>
<dbReference type="RefSeq" id="WP_012434054.1">
    <property type="nucleotide sequence ID" value="NC_010681.1"/>
</dbReference>
<dbReference type="SMR" id="B2T6B5"/>
<dbReference type="STRING" id="398527.Bphyt_3087"/>
<dbReference type="GeneID" id="97308105"/>
<dbReference type="KEGG" id="bpy:Bphyt_3087"/>
<dbReference type="eggNOG" id="COG0689">
    <property type="taxonomic scope" value="Bacteria"/>
</dbReference>
<dbReference type="HOGENOM" id="CLU_050858_0_0_4"/>
<dbReference type="OrthoDB" id="9802265at2"/>
<dbReference type="Proteomes" id="UP000001739">
    <property type="component" value="Chromosome 1"/>
</dbReference>
<dbReference type="GO" id="GO:0000175">
    <property type="term" value="F:3'-5'-RNA exonuclease activity"/>
    <property type="evidence" value="ECO:0007669"/>
    <property type="project" value="UniProtKB-UniRule"/>
</dbReference>
<dbReference type="GO" id="GO:0000049">
    <property type="term" value="F:tRNA binding"/>
    <property type="evidence" value="ECO:0007669"/>
    <property type="project" value="UniProtKB-UniRule"/>
</dbReference>
<dbReference type="GO" id="GO:0009022">
    <property type="term" value="F:tRNA nucleotidyltransferase activity"/>
    <property type="evidence" value="ECO:0007669"/>
    <property type="project" value="UniProtKB-UniRule"/>
</dbReference>
<dbReference type="GO" id="GO:0016075">
    <property type="term" value="P:rRNA catabolic process"/>
    <property type="evidence" value="ECO:0007669"/>
    <property type="project" value="UniProtKB-UniRule"/>
</dbReference>
<dbReference type="GO" id="GO:0006364">
    <property type="term" value="P:rRNA processing"/>
    <property type="evidence" value="ECO:0007669"/>
    <property type="project" value="UniProtKB-KW"/>
</dbReference>
<dbReference type="GO" id="GO:0008033">
    <property type="term" value="P:tRNA processing"/>
    <property type="evidence" value="ECO:0007669"/>
    <property type="project" value="UniProtKB-UniRule"/>
</dbReference>
<dbReference type="CDD" id="cd11362">
    <property type="entry name" value="RNase_PH_bact"/>
    <property type="match status" value="1"/>
</dbReference>
<dbReference type="FunFam" id="3.30.230.70:FF:000003">
    <property type="entry name" value="Ribonuclease PH"/>
    <property type="match status" value="1"/>
</dbReference>
<dbReference type="Gene3D" id="3.30.230.70">
    <property type="entry name" value="GHMP Kinase, N-terminal domain"/>
    <property type="match status" value="1"/>
</dbReference>
<dbReference type="HAMAP" id="MF_00564">
    <property type="entry name" value="RNase_PH"/>
    <property type="match status" value="1"/>
</dbReference>
<dbReference type="InterPro" id="IPR001247">
    <property type="entry name" value="ExoRNase_PH_dom1"/>
</dbReference>
<dbReference type="InterPro" id="IPR015847">
    <property type="entry name" value="ExoRNase_PH_dom2"/>
</dbReference>
<dbReference type="InterPro" id="IPR036345">
    <property type="entry name" value="ExoRNase_PH_dom2_sf"/>
</dbReference>
<dbReference type="InterPro" id="IPR027408">
    <property type="entry name" value="PNPase/RNase_PH_dom_sf"/>
</dbReference>
<dbReference type="InterPro" id="IPR020568">
    <property type="entry name" value="Ribosomal_Su5_D2-typ_SF"/>
</dbReference>
<dbReference type="InterPro" id="IPR050080">
    <property type="entry name" value="RNase_PH"/>
</dbReference>
<dbReference type="InterPro" id="IPR002381">
    <property type="entry name" value="RNase_PH_bac-type"/>
</dbReference>
<dbReference type="InterPro" id="IPR018336">
    <property type="entry name" value="RNase_PH_CS"/>
</dbReference>
<dbReference type="NCBIfam" id="TIGR01966">
    <property type="entry name" value="RNasePH"/>
    <property type="match status" value="1"/>
</dbReference>
<dbReference type="PANTHER" id="PTHR11953">
    <property type="entry name" value="EXOSOME COMPLEX COMPONENT"/>
    <property type="match status" value="1"/>
</dbReference>
<dbReference type="PANTHER" id="PTHR11953:SF0">
    <property type="entry name" value="EXOSOME COMPLEX COMPONENT RRP41"/>
    <property type="match status" value="1"/>
</dbReference>
<dbReference type="Pfam" id="PF01138">
    <property type="entry name" value="RNase_PH"/>
    <property type="match status" value="1"/>
</dbReference>
<dbReference type="Pfam" id="PF03725">
    <property type="entry name" value="RNase_PH_C"/>
    <property type="match status" value="1"/>
</dbReference>
<dbReference type="SUPFAM" id="SSF55666">
    <property type="entry name" value="Ribonuclease PH domain 2-like"/>
    <property type="match status" value="1"/>
</dbReference>
<dbReference type="SUPFAM" id="SSF54211">
    <property type="entry name" value="Ribosomal protein S5 domain 2-like"/>
    <property type="match status" value="1"/>
</dbReference>
<dbReference type="PROSITE" id="PS01277">
    <property type="entry name" value="RIBONUCLEASE_PH"/>
    <property type="match status" value="1"/>
</dbReference>
<comment type="function">
    <text evidence="1">Phosphorolytic 3'-5' exoribonuclease that plays an important role in tRNA 3'-end maturation. Removes nucleotide residues following the 3'-CCA terminus of tRNAs; can also add nucleotides to the ends of RNA molecules by using nucleoside diphosphates as substrates, but this may not be physiologically important. Probably plays a role in initiation of 16S rRNA degradation (leading to ribosome degradation) during starvation.</text>
</comment>
<comment type="catalytic activity">
    <reaction evidence="1">
        <text>tRNA(n+1) + phosphate = tRNA(n) + a ribonucleoside 5'-diphosphate</text>
        <dbReference type="Rhea" id="RHEA:10628"/>
        <dbReference type="Rhea" id="RHEA-COMP:17343"/>
        <dbReference type="Rhea" id="RHEA-COMP:17344"/>
        <dbReference type="ChEBI" id="CHEBI:43474"/>
        <dbReference type="ChEBI" id="CHEBI:57930"/>
        <dbReference type="ChEBI" id="CHEBI:173114"/>
        <dbReference type="EC" id="2.7.7.56"/>
    </reaction>
</comment>
<comment type="subunit">
    <text evidence="1">Homohexameric ring arranged as a trimer of dimers.</text>
</comment>
<comment type="similarity">
    <text evidence="1">Belongs to the RNase PH family.</text>
</comment>
<name>RNPH_PARPJ</name>
<sequence>MTNDTQRPSGRQANQLRDVRITRHYTKHAEGSVLVEFGDTKVICTASIAESVPSFLRDRGQGWLTAEYGMLPRATHTRSDREAARGKQTGRTQEIQRLIGRALRSVFDLEKLGARTLHIDCDVIQADGGTRTASITGAFVAAHDAVAKLLATGRIESSPITDYVAAISVGVYDGLPVLDLDYDEDSQCDTDMNVVMTGAGGFVEIQGTAEGVAFSRDEMNALLDLASDGINTLIAKQKAALEQKSE</sequence>
<feature type="chain" id="PRO_1000129330" description="Ribonuclease PH">
    <location>
        <begin position="1"/>
        <end position="246"/>
    </location>
</feature>
<feature type="binding site" evidence="1">
    <location>
        <position position="91"/>
    </location>
    <ligand>
        <name>phosphate</name>
        <dbReference type="ChEBI" id="CHEBI:43474"/>
        <note>substrate</note>
    </ligand>
</feature>
<feature type="binding site" evidence="1">
    <location>
        <begin position="129"/>
        <end position="131"/>
    </location>
    <ligand>
        <name>phosphate</name>
        <dbReference type="ChEBI" id="CHEBI:43474"/>
        <note>substrate</note>
    </ligand>
</feature>
<reference key="1">
    <citation type="journal article" date="2011" name="J. Bacteriol.">
        <title>Complete genome sequence of the plant growth-promoting endophyte Burkholderia phytofirmans strain PsJN.</title>
        <authorList>
            <person name="Weilharter A."/>
            <person name="Mitter B."/>
            <person name="Shin M.V."/>
            <person name="Chain P.S."/>
            <person name="Nowak J."/>
            <person name="Sessitsch A."/>
        </authorList>
    </citation>
    <scope>NUCLEOTIDE SEQUENCE [LARGE SCALE GENOMIC DNA]</scope>
    <source>
        <strain>DSM 17436 / LMG 22146 / PsJN</strain>
    </source>
</reference>
<evidence type="ECO:0000255" key="1">
    <source>
        <dbReference type="HAMAP-Rule" id="MF_00564"/>
    </source>
</evidence>
<keyword id="KW-0548">Nucleotidyltransferase</keyword>
<keyword id="KW-0694">RNA-binding</keyword>
<keyword id="KW-0698">rRNA processing</keyword>
<keyword id="KW-0808">Transferase</keyword>
<keyword id="KW-0819">tRNA processing</keyword>
<keyword id="KW-0820">tRNA-binding</keyword>
<proteinExistence type="inferred from homology"/>
<protein>
    <recommendedName>
        <fullName evidence="1">Ribonuclease PH</fullName>
        <shortName evidence="1">RNase PH</shortName>
        <ecNumber evidence="1">2.7.7.56</ecNumber>
    </recommendedName>
    <alternativeName>
        <fullName evidence="1">tRNA nucleotidyltransferase</fullName>
    </alternativeName>
</protein>
<organism>
    <name type="scientific">Paraburkholderia phytofirmans (strain DSM 17436 / LMG 22146 / PsJN)</name>
    <name type="common">Burkholderia phytofirmans</name>
    <dbReference type="NCBI Taxonomy" id="398527"/>
    <lineage>
        <taxon>Bacteria</taxon>
        <taxon>Pseudomonadati</taxon>
        <taxon>Pseudomonadota</taxon>
        <taxon>Betaproteobacteria</taxon>
        <taxon>Burkholderiales</taxon>
        <taxon>Burkholderiaceae</taxon>
        <taxon>Paraburkholderia</taxon>
    </lineage>
</organism>
<gene>
    <name evidence="1" type="primary">rph</name>
    <name type="ordered locus">Bphyt_3087</name>
</gene>
<accession>B2T6B5</accession>